<dbReference type="EC" id="5.4.99.12" evidence="1"/>
<dbReference type="EMBL" id="CP000921">
    <property type="protein sequence ID" value="ACO24070.1"/>
    <property type="molecule type" value="Genomic_DNA"/>
</dbReference>
<dbReference type="RefSeq" id="WP_000199197.1">
    <property type="nucleotide sequence ID" value="NC_012469.1"/>
</dbReference>
<dbReference type="SMR" id="C1CSL6"/>
<dbReference type="KEGG" id="snt:SPT_1537"/>
<dbReference type="HOGENOM" id="CLU_014673_0_1_9"/>
<dbReference type="GO" id="GO:0003723">
    <property type="term" value="F:RNA binding"/>
    <property type="evidence" value="ECO:0007669"/>
    <property type="project" value="InterPro"/>
</dbReference>
<dbReference type="GO" id="GO:0160147">
    <property type="term" value="F:tRNA pseudouridine(38-40) synthase activity"/>
    <property type="evidence" value="ECO:0007669"/>
    <property type="project" value="UniProtKB-EC"/>
</dbReference>
<dbReference type="GO" id="GO:0031119">
    <property type="term" value="P:tRNA pseudouridine synthesis"/>
    <property type="evidence" value="ECO:0007669"/>
    <property type="project" value="UniProtKB-UniRule"/>
</dbReference>
<dbReference type="CDD" id="cd02570">
    <property type="entry name" value="PseudoU_synth_EcTruA"/>
    <property type="match status" value="1"/>
</dbReference>
<dbReference type="FunFam" id="3.30.70.580:FF:000001">
    <property type="entry name" value="tRNA pseudouridine synthase A"/>
    <property type="match status" value="1"/>
</dbReference>
<dbReference type="FunFam" id="3.30.70.660:FF:000009">
    <property type="entry name" value="tRNA pseudouridine synthase A"/>
    <property type="match status" value="1"/>
</dbReference>
<dbReference type="Gene3D" id="3.30.70.660">
    <property type="entry name" value="Pseudouridine synthase I, catalytic domain, C-terminal subdomain"/>
    <property type="match status" value="1"/>
</dbReference>
<dbReference type="Gene3D" id="3.30.70.580">
    <property type="entry name" value="Pseudouridine synthase I, catalytic domain, N-terminal subdomain"/>
    <property type="match status" value="1"/>
</dbReference>
<dbReference type="HAMAP" id="MF_00171">
    <property type="entry name" value="TruA"/>
    <property type="match status" value="1"/>
</dbReference>
<dbReference type="InterPro" id="IPR020103">
    <property type="entry name" value="PsdUridine_synth_cat_dom_sf"/>
</dbReference>
<dbReference type="InterPro" id="IPR001406">
    <property type="entry name" value="PsdUridine_synth_TruA"/>
</dbReference>
<dbReference type="InterPro" id="IPR020097">
    <property type="entry name" value="PsdUridine_synth_TruA_a/b_dom"/>
</dbReference>
<dbReference type="InterPro" id="IPR020095">
    <property type="entry name" value="PsdUridine_synth_TruA_C"/>
</dbReference>
<dbReference type="InterPro" id="IPR020094">
    <property type="entry name" value="TruA/RsuA/RluB/E/F_N"/>
</dbReference>
<dbReference type="NCBIfam" id="TIGR00071">
    <property type="entry name" value="hisT_truA"/>
    <property type="match status" value="1"/>
</dbReference>
<dbReference type="PANTHER" id="PTHR11142">
    <property type="entry name" value="PSEUDOURIDYLATE SYNTHASE"/>
    <property type="match status" value="1"/>
</dbReference>
<dbReference type="PANTHER" id="PTHR11142:SF0">
    <property type="entry name" value="TRNA PSEUDOURIDINE SYNTHASE-LIKE 1"/>
    <property type="match status" value="1"/>
</dbReference>
<dbReference type="Pfam" id="PF01416">
    <property type="entry name" value="PseudoU_synth_1"/>
    <property type="match status" value="2"/>
</dbReference>
<dbReference type="PIRSF" id="PIRSF001430">
    <property type="entry name" value="tRNA_psdUrid_synth"/>
    <property type="match status" value="1"/>
</dbReference>
<dbReference type="SUPFAM" id="SSF55120">
    <property type="entry name" value="Pseudouridine synthase"/>
    <property type="match status" value="1"/>
</dbReference>
<organism>
    <name type="scientific">Streptococcus pneumoniae (strain Taiwan19F-14)</name>
    <dbReference type="NCBI Taxonomy" id="487213"/>
    <lineage>
        <taxon>Bacteria</taxon>
        <taxon>Bacillati</taxon>
        <taxon>Bacillota</taxon>
        <taxon>Bacilli</taxon>
        <taxon>Lactobacillales</taxon>
        <taxon>Streptococcaceae</taxon>
        <taxon>Streptococcus</taxon>
    </lineage>
</organism>
<evidence type="ECO:0000255" key="1">
    <source>
        <dbReference type="HAMAP-Rule" id="MF_00171"/>
    </source>
</evidence>
<name>TRUA_STRZT</name>
<gene>
    <name evidence="1" type="primary">truA</name>
    <name type="ordered locus">SPT_1537</name>
</gene>
<keyword id="KW-0413">Isomerase</keyword>
<keyword id="KW-0819">tRNA processing</keyword>
<proteinExistence type="inferred from homology"/>
<protein>
    <recommendedName>
        <fullName evidence="1">tRNA pseudouridine synthase A</fullName>
        <ecNumber evidence="1">5.4.99.12</ecNumber>
    </recommendedName>
    <alternativeName>
        <fullName evidence="1">tRNA pseudouridine(38-40) synthase</fullName>
    </alternativeName>
    <alternativeName>
        <fullName evidence="1">tRNA pseudouridylate synthase I</fullName>
    </alternativeName>
    <alternativeName>
        <fullName evidence="1">tRNA-uridine isomerase I</fullName>
    </alternativeName>
</protein>
<comment type="function">
    <text evidence="1">Formation of pseudouridine at positions 38, 39 and 40 in the anticodon stem and loop of transfer RNAs.</text>
</comment>
<comment type="catalytic activity">
    <reaction evidence="1">
        <text>uridine(38/39/40) in tRNA = pseudouridine(38/39/40) in tRNA</text>
        <dbReference type="Rhea" id="RHEA:22376"/>
        <dbReference type="Rhea" id="RHEA-COMP:10085"/>
        <dbReference type="Rhea" id="RHEA-COMP:10087"/>
        <dbReference type="ChEBI" id="CHEBI:65314"/>
        <dbReference type="ChEBI" id="CHEBI:65315"/>
        <dbReference type="EC" id="5.4.99.12"/>
    </reaction>
</comment>
<comment type="subunit">
    <text evidence="1">Homodimer.</text>
</comment>
<comment type="similarity">
    <text evidence="1">Belongs to the tRNA pseudouridine synthase TruA family.</text>
</comment>
<accession>C1CSL6</accession>
<feature type="chain" id="PRO_1000194575" description="tRNA pseudouridine synthase A">
    <location>
        <begin position="1"/>
        <end position="249"/>
    </location>
</feature>
<feature type="active site" description="Nucleophile" evidence="1">
    <location>
        <position position="53"/>
    </location>
</feature>
<feature type="binding site" evidence="1">
    <location>
        <position position="111"/>
    </location>
    <ligand>
        <name>substrate</name>
    </ligand>
</feature>
<reference key="1">
    <citation type="journal article" date="2010" name="Genome Biol.">
        <title>Structure and dynamics of the pan-genome of Streptococcus pneumoniae and closely related species.</title>
        <authorList>
            <person name="Donati C."/>
            <person name="Hiller N.L."/>
            <person name="Tettelin H."/>
            <person name="Muzzi A."/>
            <person name="Croucher N.J."/>
            <person name="Angiuoli S.V."/>
            <person name="Oggioni M."/>
            <person name="Dunning Hotopp J.C."/>
            <person name="Hu F.Z."/>
            <person name="Riley D.R."/>
            <person name="Covacci A."/>
            <person name="Mitchell T.J."/>
            <person name="Bentley S.D."/>
            <person name="Kilian M."/>
            <person name="Ehrlich G.D."/>
            <person name="Rappuoli R."/>
            <person name="Moxon E.R."/>
            <person name="Masignani V."/>
        </authorList>
    </citation>
    <scope>NUCLEOTIDE SEQUENCE [LARGE SCALE GENOMIC DNA]</scope>
    <source>
        <strain>Taiwan19F-14</strain>
    </source>
</reference>
<sequence>MTRYKATISYDGYAFAGFQRQPHARSVQEEIEKTLTRLNKGQTITVHGAGRTDSGVHALGQVIHFDLPYQMDEEKLRFALDTQSPEDIDVISIELVAADFHCRYAKHSKTYEFIVDRGRPKNPMRRHYATHFPYPLDVERMQIAIKKLEGTHDFTGFTASGTSVEDKVRTITEASLIVDETGQFLTFTFSGNGFLYKQIRNMVGTLLKIGNNRMPVEQIDLILEKKDRQLAGPTAAPNGLYLKEIRYEE</sequence>